<feature type="chain" id="PRO_0000254905" description="DNA-directed RNA polymerase III subunit RPC3">
    <location>
        <begin position="1"/>
        <end position="533"/>
    </location>
</feature>
<feature type="region of interest" description="Disordered" evidence="3">
    <location>
        <begin position="197"/>
        <end position="230"/>
    </location>
</feature>
<feature type="compositionally biased region" description="Basic and acidic residues" evidence="3">
    <location>
        <begin position="211"/>
        <end position="228"/>
    </location>
</feature>
<feature type="modified residue" description="Phosphoserine" evidence="2">
    <location>
        <position position="194"/>
    </location>
</feature>
<protein>
    <recommendedName>
        <fullName>DNA-directed RNA polymerase III subunit RPC3</fullName>
        <shortName>RNA polymerase III subunit C3</shortName>
    </recommendedName>
    <alternativeName>
        <fullName>DNA-directed RNA polymerase III subunit C</fullName>
    </alternativeName>
</protein>
<dbReference type="EMBL" id="BC109972">
    <property type="protein sequence ID" value="AAI09973.1"/>
    <property type="molecule type" value="mRNA"/>
</dbReference>
<dbReference type="RefSeq" id="NP_001033600.1">
    <property type="nucleotide sequence ID" value="NM_001038511.1"/>
</dbReference>
<dbReference type="SMR" id="Q2TBL4"/>
<dbReference type="FunCoup" id="Q2TBL4">
    <property type="interactions" value="5001"/>
</dbReference>
<dbReference type="STRING" id="9913.ENSBTAP00000028832"/>
<dbReference type="PaxDb" id="9913-ENSBTAP00000028832"/>
<dbReference type="Ensembl" id="ENSBTAT00000028832.5">
    <property type="protein sequence ID" value="ENSBTAP00000028832.5"/>
    <property type="gene ID" value="ENSBTAG00000021637.7"/>
</dbReference>
<dbReference type="GeneID" id="507314"/>
<dbReference type="KEGG" id="bta:507314"/>
<dbReference type="CTD" id="10623"/>
<dbReference type="VEuPathDB" id="HostDB:ENSBTAG00000021637"/>
<dbReference type="VGNC" id="VGNC:33147">
    <property type="gene designation" value="POLR3C"/>
</dbReference>
<dbReference type="eggNOG" id="KOG2587">
    <property type="taxonomic scope" value="Eukaryota"/>
</dbReference>
<dbReference type="GeneTree" id="ENSGT00390000002799"/>
<dbReference type="InParanoid" id="Q2TBL4"/>
<dbReference type="OMA" id="GQYVVHM"/>
<dbReference type="OrthoDB" id="272392at2759"/>
<dbReference type="Reactome" id="R-BTA-76061">
    <property type="pathway name" value="RNA Polymerase III Transcription Initiation From Type 1 Promoter"/>
</dbReference>
<dbReference type="Reactome" id="R-BTA-76066">
    <property type="pathway name" value="RNA Polymerase III Transcription Initiation From Type 2 Promoter"/>
</dbReference>
<dbReference type="Reactome" id="R-BTA-76071">
    <property type="pathway name" value="RNA Polymerase III Transcription Initiation From Type 3 Promoter"/>
</dbReference>
<dbReference type="Proteomes" id="UP000009136">
    <property type="component" value="Chromosome 3"/>
</dbReference>
<dbReference type="Bgee" id="ENSBTAG00000021637">
    <property type="expression patterns" value="Expressed in oocyte and 107 other cell types or tissues"/>
</dbReference>
<dbReference type="GO" id="GO:0005654">
    <property type="term" value="C:nucleoplasm"/>
    <property type="evidence" value="ECO:0007669"/>
    <property type="project" value="Ensembl"/>
</dbReference>
<dbReference type="GO" id="GO:0005666">
    <property type="term" value="C:RNA polymerase III complex"/>
    <property type="evidence" value="ECO:0000318"/>
    <property type="project" value="GO_Central"/>
</dbReference>
<dbReference type="GO" id="GO:0003697">
    <property type="term" value="F:single-stranded DNA binding"/>
    <property type="evidence" value="ECO:0000250"/>
    <property type="project" value="UniProtKB"/>
</dbReference>
<dbReference type="GO" id="GO:0051607">
    <property type="term" value="P:defense response to virus"/>
    <property type="evidence" value="ECO:0007669"/>
    <property type="project" value="UniProtKB-KW"/>
</dbReference>
<dbReference type="GO" id="GO:0006351">
    <property type="term" value="P:DNA-templated transcription"/>
    <property type="evidence" value="ECO:0007669"/>
    <property type="project" value="InterPro"/>
</dbReference>
<dbReference type="GO" id="GO:0045087">
    <property type="term" value="P:innate immune response"/>
    <property type="evidence" value="ECO:0007669"/>
    <property type="project" value="UniProtKB-KW"/>
</dbReference>
<dbReference type="GO" id="GO:0045089">
    <property type="term" value="P:positive regulation of innate immune response"/>
    <property type="evidence" value="ECO:0000250"/>
    <property type="project" value="UniProtKB"/>
</dbReference>
<dbReference type="GO" id="GO:0032728">
    <property type="term" value="P:positive regulation of interferon-beta production"/>
    <property type="evidence" value="ECO:0000250"/>
    <property type="project" value="UniProtKB"/>
</dbReference>
<dbReference type="FunFam" id="1.10.10.10:FF:000199">
    <property type="entry name" value="DNA-directed RNA polymerase III subunit RPC3"/>
    <property type="match status" value="1"/>
</dbReference>
<dbReference type="FunFam" id="1.10.10.10:FF:000218">
    <property type="entry name" value="DNA-directed RNA polymerase III subunit RPC3"/>
    <property type="match status" value="1"/>
</dbReference>
<dbReference type="FunFam" id="1.10.10.10:FF:000256">
    <property type="entry name" value="DNA-directed RNA polymerase III subunit RPC3"/>
    <property type="match status" value="1"/>
</dbReference>
<dbReference type="FunFam" id="1.10.10.10:FF:000262">
    <property type="entry name" value="DNA-directed RNA polymerase III subunit RPC3"/>
    <property type="match status" value="1"/>
</dbReference>
<dbReference type="Gene3D" id="6.10.140.1450">
    <property type="match status" value="1"/>
</dbReference>
<dbReference type="Gene3D" id="1.10.10.10">
    <property type="entry name" value="Winged helix-like DNA-binding domain superfamily/Winged helix DNA-binding domain"/>
    <property type="match status" value="4"/>
</dbReference>
<dbReference type="InterPro" id="IPR055207">
    <property type="entry name" value="POLR3C_WHD"/>
</dbReference>
<dbReference type="InterPro" id="IPR013197">
    <property type="entry name" value="RNA_pol_III_RPC82-rel_HTH"/>
</dbReference>
<dbReference type="InterPro" id="IPR008806">
    <property type="entry name" value="RNA_pol_III_Rpc82_C"/>
</dbReference>
<dbReference type="InterPro" id="IPR039748">
    <property type="entry name" value="RPC3"/>
</dbReference>
<dbReference type="InterPro" id="IPR036388">
    <property type="entry name" value="WH-like_DNA-bd_sf"/>
</dbReference>
<dbReference type="PANTHER" id="PTHR12949:SF0">
    <property type="entry name" value="DNA-DIRECTED RNA POLYMERASE III SUBUNIT RPC3"/>
    <property type="match status" value="1"/>
</dbReference>
<dbReference type="PANTHER" id="PTHR12949">
    <property type="entry name" value="RNA POLYMERASE III DNA DIRECTED -RELATED"/>
    <property type="match status" value="1"/>
</dbReference>
<dbReference type="Pfam" id="PF08221">
    <property type="entry name" value="HTH_9"/>
    <property type="match status" value="1"/>
</dbReference>
<dbReference type="Pfam" id="PF22536">
    <property type="entry name" value="POLR3C_WHD"/>
    <property type="match status" value="1"/>
</dbReference>
<dbReference type="Pfam" id="PF05645">
    <property type="entry name" value="RNA_pol_Rpc82"/>
    <property type="match status" value="1"/>
</dbReference>
<dbReference type="Pfam" id="PF20912">
    <property type="entry name" value="RPC3_helical"/>
    <property type="match status" value="1"/>
</dbReference>
<organism>
    <name type="scientific">Bos taurus</name>
    <name type="common">Bovine</name>
    <dbReference type="NCBI Taxonomy" id="9913"/>
    <lineage>
        <taxon>Eukaryota</taxon>
        <taxon>Metazoa</taxon>
        <taxon>Chordata</taxon>
        <taxon>Craniata</taxon>
        <taxon>Vertebrata</taxon>
        <taxon>Euteleostomi</taxon>
        <taxon>Mammalia</taxon>
        <taxon>Eutheria</taxon>
        <taxon>Laurasiatheria</taxon>
        <taxon>Artiodactyla</taxon>
        <taxon>Ruminantia</taxon>
        <taxon>Pecora</taxon>
        <taxon>Bovidae</taxon>
        <taxon>Bovinae</taxon>
        <taxon>Bos</taxon>
    </lineage>
</organism>
<comment type="function">
    <text evidence="2">DNA-dependent RNA polymerase catalyzes the transcription of DNA into RNA using the four ribonucleoside triphosphates as substrates (By similarity). Specific peripheric component of RNA polymerase III (Pol III) which synthesizes small non-coding RNAs including 5S rRNA, snRNAs, tRNAs and miRNAs from at least 500 distinct genomic loci. Part of POLR3C/RPC3-POLR3F/RPC6-POLR3G/RPC7 heterotrimer, coordinates the dynamics of Pol III stalk and clamp modules during the transition from apo to elongation state (By similarity). Pol III plays a key role in sensing and limiting infection by intracellular bacteria and DNA viruses. Acts as a nuclear and cytosolic DNA sensor involved in innate immune response. Can sense non-self dsDNA that serves as template for transcription into dsRNA. The non-self RNA polymerase III transcripts, such as Epstein-Barr virus-encoded RNAs (EBERs) induce type I interferon and NF-kappa-B through the RIG-I pathway. Preferentially binds single-stranded DNA (ssDNA) in a sequence-independent manner (By similarity).</text>
</comment>
<comment type="subunit">
    <text evidence="1 2">Component of the RNA polymerase III complex consisting of 17 subunits: a ten-subunit horseshoe-shaped catalytic core composed of POLR3A/RPC1, POLR3B/RPC2, POLR1C/RPAC1, POLR1D/RPAC2, POLR3K/RPC10, POLR2E/RPABC1, POLR2F/RPABC2, POLR2H/RPABC3, POLR2K/RPABC4 and POLR2L/RPABC5; a mobile stalk composed of two subunits POLR3H/RPC8 and CRCP/RPC9, protruding from the core and functioning primarily in transcription initiation; and additional subunits homologous to general transcription factors of the RNA polymerase II machinery, POLR3C/RPC3-POLR3F/RPC6-POLR3G/RPC7 heterotrimer required for transcription initiation and POLR3D/RPC4-POLR3E/RPC5 heterodimer involved in both transcription initiation and termination. Directly interacts with POLR3G/RPC7 and POLR3GL. Directly interacts with POLR3F/RPC6. Interacts with GTF3C4. As part of the RNA polymerase III complex, interacts with PKP2.</text>
</comment>
<comment type="subcellular location">
    <subcellularLocation>
        <location evidence="2">Nucleus</location>
    </subcellularLocation>
</comment>
<comment type="similarity">
    <text evidence="4">Belongs to the eukaryotic RPC3/POLR3C RNA polymerase subunit family.</text>
</comment>
<name>RPC3_BOVIN</name>
<proteinExistence type="evidence at transcript level"/>
<accession>Q2TBL4</accession>
<keyword id="KW-0051">Antiviral defense</keyword>
<keyword id="KW-0238">DNA-binding</keyword>
<keyword id="KW-0240">DNA-directed RNA polymerase</keyword>
<keyword id="KW-0391">Immunity</keyword>
<keyword id="KW-0399">Innate immunity</keyword>
<keyword id="KW-0539">Nucleus</keyword>
<keyword id="KW-0597">Phosphoprotein</keyword>
<keyword id="KW-1185">Reference proteome</keyword>
<keyword id="KW-0804">Transcription</keyword>
<sequence>MTQAEIKLCSLLLQEHFGEIVEKIGVHLIRTGSQPLRVIAHDTGTSLDQVKKALCVLIQHNLVTYQVHKRGVVEYEAQCNRVLRMLRYPRYIYTAKTLYSDTGELIVEELLLNGKMTMSAVVKKVADRLTETMEDGKTMDYAEVSNTFVRLVDTHFVQRCPLVPATENSDTGPPPPAPTLVVSEKDMYLVPKLSLIGKGKRRRSSDEDATGEPKAKRPKQTTDNKEPIPDDGIYWQANLDRFHQHFRDQAIVSAVANRMDQTSSEIVRTMLRMSEVTTPSGAPFTQPLSSNEIFRSLPVGYNISKQVLDQYLTLLADDPLEFVGKSGDSGGGMYVINLHKALGSLATATLESVVQERFGSRCARIFRLVLQKKHLEQKQVEDFAMIPAKEAKDMLYKMLSENFISLQEIPKTPDHAPSRTFYLYTVNILSAARMLLHRCYKSVANLIERRQFETKENKRLLEKSQRVEAIIASMQATGAEEAQLQEIEEMITAPERQQLETLKRNVNKLDACEIQVDETIFLLESYIESTMKR</sequence>
<gene>
    <name type="primary">POLR3C</name>
</gene>
<evidence type="ECO:0000250" key="1"/>
<evidence type="ECO:0000250" key="2">
    <source>
        <dbReference type="UniProtKB" id="Q9BUI4"/>
    </source>
</evidence>
<evidence type="ECO:0000256" key="3">
    <source>
        <dbReference type="SAM" id="MobiDB-lite"/>
    </source>
</evidence>
<evidence type="ECO:0000305" key="4"/>
<reference key="1">
    <citation type="submission" date="2005-11" db="EMBL/GenBank/DDBJ databases">
        <authorList>
            <consortium name="NIH - Mammalian Gene Collection (MGC) project"/>
        </authorList>
    </citation>
    <scope>NUCLEOTIDE SEQUENCE [LARGE SCALE MRNA]</scope>
    <source>
        <strain>Crossbred X Angus</strain>
        <tissue>Liver</tissue>
    </source>
</reference>